<comment type="function">
    <text evidence="1">Produces ATP from ADP in the presence of a proton gradient across the membrane. The alpha chain is a regulatory subunit.</text>
</comment>
<comment type="catalytic activity">
    <reaction evidence="1">
        <text>ATP + H2O + 4 H(+)(in) = ADP + phosphate + 5 H(+)(out)</text>
        <dbReference type="Rhea" id="RHEA:57720"/>
        <dbReference type="ChEBI" id="CHEBI:15377"/>
        <dbReference type="ChEBI" id="CHEBI:15378"/>
        <dbReference type="ChEBI" id="CHEBI:30616"/>
        <dbReference type="ChEBI" id="CHEBI:43474"/>
        <dbReference type="ChEBI" id="CHEBI:456216"/>
        <dbReference type="EC" id="7.1.2.2"/>
    </reaction>
</comment>
<comment type="subunit">
    <text evidence="1">F-type ATPases have 2 components, CF(1) - the catalytic core - and CF(0) - the membrane proton channel. CF(1) has five subunits: alpha(3), beta(3), gamma(1), delta(1), epsilon(1). CF(0) has three main subunits: a(1), b(2) and c(9-12). The alpha and beta chains form an alternating ring which encloses part of the gamma chain. CF(1) is attached to CF(0) by a central stalk formed by the gamma and epsilon chains, while a peripheral stalk is formed by the delta and b chains.</text>
</comment>
<comment type="subcellular location">
    <subcellularLocation>
        <location evidence="1">Cell membrane</location>
        <topology evidence="1">Peripheral membrane protein</topology>
    </subcellularLocation>
</comment>
<comment type="similarity">
    <text evidence="1">Belongs to the ATPase alpha/beta chains family.</text>
</comment>
<proteinExistence type="inferred from homology"/>
<keyword id="KW-0066">ATP synthesis</keyword>
<keyword id="KW-0067">ATP-binding</keyword>
<keyword id="KW-1003">Cell membrane</keyword>
<keyword id="KW-0139">CF(1)</keyword>
<keyword id="KW-0375">Hydrogen ion transport</keyword>
<keyword id="KW-0406">Ion transport</keyword>
<keyword id="KW-0472">Membrane</keyword>
<keyword id="KW-0547">Nucleotide-binding</keyword>
<keyword id="KW-1185">Reference proteome</keyword>
<keyword id="KW-1278">Translocase</keyword>
<keyword id="KW-0813">Transport</keyword>
<sequence length="514" mass="56888">MQISSSEICELISKKIAKFDIISSMHNEGRVISVSDGIIQIYGLSDVMQGEMLSLPGDKYAIALNLEKNVVGAIVMGEYTHITEGTKIISTGRIFEIPVGSKFLGRVINALGVPIDGKGRIQEEKFLPVEINAPGVIDRQKISEPLQTGYKSIDAMVPIGKGQRELIIGDRQTGKTSLAIDTIINQRNTKIKCIYVAIGQKFSTIVNLVRQLEDNQALNHTIVIVASASESAALQYLVPYSGCSLGEFFRDQGKDALIVYDDLSKHAIAYRQISLLLRRPPGREAFPGDIFYLHARLLERACRVNSNYLKNILGTVNKFSTGSLTALPIIETQDGDVSSFIPTNVISITDGQIFLESNLFNSGIRPAINPGISVSRVGGAAQCQIIRKLSSGIRTSLAQYQELIAFSQFSSELDEITRNQLIHGKKLIEILKQKQYHPMSIAEQAIILFAAENNFLNDVSVEQIIKFEKMLLLFFNTNNSELVLSINNYKRINDVVENQLSDVINAFKLTKCWS</sequence>
<gene>
    <name evidence="1" type="primary">atpA</name>
    <name type="ordered locus">bbp_006</name>
</gene>
<evidence type="ECO:0000255" key="1">
    <source>
        <dbReference type="HAMAP-Rule" id="MF_01346"/>
    </source>
</evidence>
<reference key="1">
    <citation type="journal article" date="2003" name="Proc. Natl. Acad. Sci. U.S.A.">
        <title>Reductive genome evolution in Buchnera aphidicola.</title>
        <authorList>
            <person name="van Ham R.C.H.J."/>
            <person name="Kamerbeek J."/>
            <person name="Palacios C."/>
            <person name="Rausell C."/>
            <person name="Abascal F."/>
            <person name="Bastolla U."/>
            <person name="Fernandez J.M."/>
            <person name="Jimenez L."/>
            <person name="Postigo M."/>
            <person name="Silva F.J."/>
            <person name="Tamames J."/>
            <person name="Viguera E."/>
            <person name="Latorre A."/>
            <person name="Valencia A."/>
            <person name="Moran F."/>
            <person name="Moya A."/>
        </authorList>
    </citation>
    <scope>NUCLEOTIDE SEQUENCE [LARGE SCALE GENOMIC DNA]</scope>
    <source>
        <strain>Bp</strain>
    </source>
</reference>
<protein>
    <recommendedName>
        <fullName evidence="1">ATP synthase subunit alpha</fullName>
        <ecNumber evidence="1">7.1.2.2</ecNumber>
    </recommendedName>
    <alternativeName>
        <fullName evidence="1">ATP synthase F1 sector subunit alpha</fullName>
    </alternativeName>
    <alternativeName>
        <fullName evidence="1">F-ATPase subunit alpha</fullName>
    </alternativeName>
</protein>
<accession>Q89B41</accession>
<feature type="chain" id="PRO_0000144322" description="ATP synthase subunit alpha">
    <location>
        <begin position="1"/>
        <end position="514"/>
    </location>
</feature>
<feature type="binding site" evidence="1">
    <location>
        <begin position="169"/>
        <end position="176"/>
    </location>
    <ligand>
        <name>ATP</name>
        <dbReference type="ChEBI" id="CHEBI:30616"/>
    </ligand>
</feature>
<feature type="site" description="Required for activity">
    <location>
        <position position="373"/>
    </location>
</feature>
<name>ATPA_BUCBP</name>
<dbReference type="EC" id="7.1.2.2" evidence="1"/>
<dbReference type="EMBL" id="AE016826">
    <property type="protein sequence ID" value="AAO26750.1"/>
    <property type="molecule type" value="Genomic_DNA"/>
</dbReference>
<dbReference type="RefSeq" id="WP_011091151.1">
    <property type="nucleotide sequence ID" value="NC_004545.1"/>
</dbReference>
<dbReference type="SMR" id="Q89B41"/>
<dbReference type="STRING" id="224915.bbp_006"/>
<dbReference type="KEGG" id="bab:bbp_006"/>
<dbReference type="eggNOG" id="COG0056">
    <property type="taxonomic scope" value="Bacteria"/>
</dbReference>
<dbReference type="HOGENOM" id="CLU_010091_2_1_6"/>
<dbReference type="OrthoDB" id="9803053at2"/>
<dbReference type="Proteomes" id="UP000000601">
    <property type="component" value="Chromosome"/>
</dbReference>
<dbReference type="GO" id="GO:0005886">
    <property type="term" value="C:plasma membrane"/>
    <property type="evidence" value="ECO:0007669"/>
    <property type="project" value="UniProtKB-SubCell"/>
</dbReference>
<dbReference type="GO" id="GO:0045259">
    <property type="term" value="C:proton-transporting ATP synthase complex"/>
    <property type="evidence" value="ECO:0007669"/>
    <property type="project" value="UniProtKB-KW"/>
</dbReference>
<dbReference type="GO" id="GO:0043531">
    <property type="term" value="F:ADP binding"/>
    <property type="evidence" value="ECO:0007669"/>
    <property type="project" value="TreeGrafter"/>
</dbReference>
<dbReference type="GO" id="GO:0005524">
    <property type="term" value="F:ATP binding"/>
    <property type="evidence" value="ECO:0007669"/>
    <property type="project" value="UniProtKB-UniRule"/>
</dbReference>
<dbReference type="GO" id="GO:0046933">
    <property type="term" value="F:proton-transporting ATP synthase activity, rotational mechanism"/>
    <property type="evidence" value="ECO:0007669"/>
    <property type="project" value="UniProtKB-UniRule"/>
</dbReference>
<dbReference type="CDD" id="cd18113">
    <property type="entry name" value="ATP-synt_F1_alpha_C"/>
    <property type="match status" value="1"/>
</dbReference>
<dbReference type="CDD" id="cd18116">
    <property type="entry name" value="ATP-synt_F1_alpha_N"/>
    <property type="match status" value="1"/>
</dbReference>
<dbReference type="CDD" id="cd01132">
    <property type="entry name" value="F1-ATPase_alpha_CD"/>
    <property type="match status" value="1"/>
</dbReference>
<dbReference type="FunFam" id="1.20.150.20:FF:000001">
    <property type="entry name" value="ATP synthase subunit alpha"/>
    <property type="match status" value="1"/>
</dbReference>
<dbReference type="FunFam" id="3.40.50.300:FF:000002">
    <property type="entry name" value="ATP synthase subunit alpha"/>
    <property type="match status" value="1"/>
</dbReference>
<dbReference type="Gene3D" id="2.40.30.20">
    <property type="match status" value="1"/>
</dbReference>
<dbReference type="Gene3D" id="1.20.150.20">
    <property type="entry name" value="ATP synthase alpha/beta chain, C-terminal domain"/>
    <property type="match status" value="1"/>
</dbReference>
<dbReference type="Gene3D" id="3.40.50.300">
    <property type="entry name" value="P-loop containing nucleotide triphosphate hydrolases"/>
    <property type="match status" value="1"/>
</dbReference>
<dbReference type="HAMAP" id="MF_01346">
    <property type="entry name" value="ATP_synth_alpha_bact"/>
    <property type="match status" value="1"/>
</dbReference>
<dbReference type="InterPro" id="IPR023366">
    <property type="entry name" value="ATP_synth_asu-like_sf"/>
</dbReference>
<dbReference type="InterPro" id="IPR000793">
    <property type="entry name" value="ATP_synth_asu_C"/>
</dbReference>
<dbReference type="InterPro" id="IPR038376">
    <property type="entry name" value="ATP_synth_asu_C_sf"/>
</dbReference>
<dbReference type="InterPro" id="IPR033732">
    <property type="entry name" value="ATP_synth_F1_a_nt-bd_dom"/>
</dbReference>
<dbReference type="InterPro" id="IPR005294">
    <property type="entry name" value="ATP_synth_F1_asu"/>
</dbReference>
<dbReference type="InterPro" id="IPR020003">
    <property type="entry name" value="ATPase_a/bsu_AS"/>
</dbReference>
<dbReference type="InterPro" id="IPR004100">
    <property type="entry name" value="ATPase_F1/V1/A1_a/bsu_N"/>
</dbReference>
<dbReference type="InterPro" id="IPR036121">
    <property type="entry name" value="ATPase_F1/V1/A1_a/bsu_N_sf"/>
</dbReference>
<dbReference type="InterPro" id="IPR000194">
    <property type="entry name" value="ATPase_F1/V1/A1_a/bsu_nucl-bd"/>
</dbReference>
<dbReference type="InterPro" id="IPR027417">
    <property type="entry name" value="P-loop_NTPase"/>
</dbReference>
<dbReference type="NCBIfam" id="TIGR00962">
    <property type="entry name" value="atpA"/>
    <property type="match status" value="1"/>
</dbReference>
<dbReference type="NCBIfam" id="NF009884">
    <property type="entry name" value="PRK13343.1"/>
    <property type="match status" value="1"/>
</dbReference>
<dbReference type="PANTHER" id="PTHR48082">
    <property type="entry name" value="ATP SYNTHASE SUBUNIT ALPHA, MITOCHONDRIAL"/>
    <property type="match status" value="1"/>
</dbReference>
<dbReference type="PANTHER" id="PTHR48082:SF2">
    <property type="entry name" value="ATP SYNTHASE SUBUNIT ALPHA, MITOCHONDRIAL"/>
    <property type="match status" value="1"/>
</dbReference>
<dbReference type="Pfam" id="PF00006">
    <property type="entry name" value="ATP-synt_ab"/>
    <property type="match status" value="1"/>
</dbReference>
<dbReference type="Pfam" id="PF00306">
    <property type="entry name" value="ATP-synt_ab_C"/>
    <property type="match status" value="1"/>
</dbReference>
<dbReference type="Pfam" id="PF02874">
    <property type="entry name" value="ATP-synt_ab_N"/>
    <property type="match status" value="1"/>
</dbReference>
<dbReference type="SUPFAM" id="SSF47917">
    <property type="entry name" value="C-terminal domain of alpha and beta subunits of F1 ATP synthase"/>
    <property type="match status" value="1"/>
</dbReference>
<dbReference type="SUPFAM" id="SSF50615">
    <property type="entry name" value="N-terminal domain of alpha and beta subunits of F1 ATP synthase"/>
    <property type="match status" value="1"/>
</dbReference>
<dbReference type="SUPFAM" id="SSF52540">
    <property type="entry name" value="P-loop containing nucleoside triphosphate hydrolases"/>
    <property type="match status" value="1"/>
</dbReference>
<dbReference type="PROSITE" id="PS00152">
    <property type="entry name" value="ATPASE_ALPHA_BETA"/>
    <property type="match status" value="1"/>
</dbReference>
<organism>
    <name type="scientific">Buchnera aphidicola subsp. Baizongia pistaciae (strain Bp)</name>
    <dbReference type="NCBI Taxonomy" id="224915"/>
    <lineage>
        <taxon>Bacteria</taxon>
        <taxon>Pseudomonadati</taxon>
        <taxon>Pseudomonadota</taxon>
        <taxon>Gammaproteobacteria</taxon>
        <taxon>Enterobacterales</taxon>
        <taxon>Erwiniaceae</taxon>
        <taxon>Buchnera</taxon>
    </lineage>
</organism>